<reference key="1">
    <citation type="submission" date="2008-05" db="EMBL/GenBank/DDBJ databases">
        <title>Complete sequence of Shigella boydii serotype 18 strain BS512.</title>
        <authorList>
            <person name="Rasko D.A."/>
            <person name="Rosovitz M."/>
            <person name="Maurelli A.T."/>
            <person name="Myers G."/>
            <person name="Seshadri R."/>
            <person name="Cer R."/>
            <person name="Jiang L."/>
            <person name="Ravel J."/>
            <person name="Sebastian Y."/>
        </authorList>
    </citation>
    <scope>NUCLEOTIDE SEQUENCE [LARGE SCALE GENOMIC DNA]</scope>
    <source>
        <strain>CDC 3083-94 / BS512</strain>
    </source>
</reference>
<gene>
    <name evidence="1" type="primary">yqgF</name>
    <name type="ordered locus">SbBS512_E3381</name>
</gene>
<feature type="chain" id="PRO_1000131074" description="Putative pre-16S rRNA nuclease">
    <location>
        <begin position="1"/>
        <end position="138"/>
    </location>
</feature>
<evidence type="ECO:0000255" key="1">
    <source>
        <dbReference type="HAMAP-Rule" id="MF_00651"/>
    </source>
</evidence>
<sequence length="138" mass="15186">MSGTLLAFDFGTKSIGVAVGQRITGTARPLPAIKAQDGTPDWNLIERLLKEWQPDEIIVGLPLNMDGTEQPLTARARKFANRIHGRFGVEVKLHDERLSTVEARSGLFEQGGYRALNKGKVDSASAVIILESYFEQGY</sequence>
<name>YQGF_SHIB3</name>
<proteinExistence type="inferred from homology"/>
<keyword id="KW-0963">Cytoplasm</keyword>
<keyword id="KW-0378">Hydrolase</keyword>
<keyword id="KW-0540">Nuclease</keyword>
<keyword id="KW-1185">Reference proteome</keyword>
<keyword id="KW-0690">Ribosome biogenesis</keyword>
<dbReference type="EC" id="3.1.-.-" evidence="1"/>
<dbReference type="EMBL" id="CP001063">
    <property type="protein sequence ID" value="ACD08135.1"/>
    <property type="molecule type" value="Genomic_DNA"/>
</dbReference>
<dbReference type="SMR" id="B2U0W9"/>
<dbReference type="STRING" id="344609.SbBS512_E3381"/>
<dbReference type="KEGG" id="sbc:SbBS512_E3381"/>
<dbReference type="HOGENOM" id="CLU_098240_3_0_6"/>
<dbReference type="Proteomes" id="UP000001030">
    <property type="component" value="Chromosome"/>
</dbReference>
<dbReference type="GO" id="GO:0005829">
    <property type="term" value="C:cytosol"/>
    <property type="evidence" value="ECO:0007669"/>
    <property type="project" value="TreeGrafter"/>
</dbReference>
<dbReference type="GO" id="GO:0004518">
    <property type="term" value="F:nuclease activity"/>
    <property type="evidence" value="ECO:0007669"/>
    <property type="project" value="UniProtKB-KW"/>
</dbReference>
<dbReference type="GO" id="GO:0000967">
    <property type="term" value="P:rRNA 5'-end processing"/>
    <property type="evidence" value="ECO:0007669"/>
    <property type="project" value="UniProtKB-UniRule"/>
</dbReference>
<dbReference type="CDD" id="cd16964">
    <property type="entry name" value="YqgF"/>
    <property type="match status" value="1"/>
</dbReference>
<dbReference type="FunFam" id="3.30.420.140:FF:000002">
    <property type="entry name" value="Putative pre-16S rRNA nuclease"/>
    <property type="match status" value="1"/>
</dbReference>
<dbReference type="Gene3D" id="3.30.420.140">
    <property type="entry name" value="YqgF/RNase H-like domain"/>
    <property type="match status" value="1"/>
</dbReference>
<dbReference type="HAMAP" id="MF_00651">
    <property type="entry name" value="Nuclease_YqgF"/>
    <property type="match status" value="1"/>
</dbReference>
<dbReference type="InterPro" id="IPR012337">
    <property type="entry name" value="RNaseH-like_sf"/>
</dbReference>
<dbReference type="InterPro" id="IPR005227">
    <property type="entry name" value="YqgF"/>
</dbReference>
<dbReference type="InterPro" id="IPR006641">
    <property type="entry name" value="YqgF/RNaseH-like_dom"/>
</dbReference>
<dbReference type="InterPro" id="IPR037027">
    <property type="entry name" value="YqgF/RNaseH-like_dom_sf"/>
</dbReference>
<dbReference type="NCBIfam" id="TIGR00250">
    <property type="entry name" value="RNAse_H_YqgF"/>
    <property type="match status" value="1"/>
</dbReference>
<dbReference type="PANTHER" id="PTHR33317">
    <property type="entry name" value="POLYNUCLEOTIDYL TRANSFERASE, RIBONUCLEASE H-LIKE SUPERFAMILY PROTEIN"/>
    <property type="match status" value="1"/>
</dbReference>
<dbReference type="PANTHER" id="PTHR33317:SF4">
    <property type="entry name" value="POLYNUCLEOTIDYL TRANSFERASE, RIBONUCLEASE H-LIKE SUPERFAMILY PROTEIN"/>
    <property type="match status" value="1"/>
</dbReference>
<dbReference type="Pfam" id="PF03652">
    <property type="entry name" value="RuvX"/>
    <property type="match status" value="1"/>
</dbReference>
<dbReference type="SMART" id="SM00732">
    <property type="entry name" value="YqgFc"/>
    <property type="match status" value="1"/>
</dbReference>
<dbReference type="SUPFAM" id="SSF53098">
    <property type="entry name" value="Ribonuclease H-like"/>
    <property type="match status" value="1"/>
</dbReference>
<protein>
    <recommendedName>
        <fullName evidence="1">Putative pre-16S rRNA nuclease</fullName>
        <ecNumber evidence="1">3.1.-.-</ecNumber>
    </recommendedName>
</protein>
<organism>
    <name type="scientific">Shigella boydii serotype 18 (strain CDC 3083-94 / BS512)</name>
    <dbReference type="NCBI Taxonomy" id="344609"/>
    <lineage>
        <taxon>Bacteria</taxon>
        <taxon>Pseudomonadati</taxon>
        <taxon>Pseudomonadota</taxon>
        <taxon>Gammaproteobacteria</taxon>
        <taxon>Enterobacterales</taxon>
        <taxon>Enterobacteriaceae</taxon>
        <taxon>Shigella</taxon>
    </lineage>
</organism>
<accession>B2U0W9</accession>
<comment type="function">
    <text evidence="1">Could be a nuclease involved in processing of the 5'-end of pre-16S rRNA.</text>
</comment>
<comment type="subcellular location">
    <subcellularLocation>
        <location evidence="1">Cytoplasm</location>
    </subcellularLocation>
</comment>
<comment type="similarity">
    <text evidence="1">Belongs to the YqgF nuclease family.</text>
</comment>